<protein>
    <recommendedName>
        <fullName>Mu-conotoxin-like Cal 12.1.2d</fullName>
    </recommendedName>
    <alternativeName>
        <fullName>Conotoxin CalTx 12.1.3A</fullName>
    </alternativeName>
</protein>
<reference key="1">
    <citation type="journal article" date="2011" name="J. Exp. Biol.">
        <title>A diverse family of novel peptide toxins from an unusual cone snail, Conus californicus.</title>
        <authorList>
            <person name="Gilly W.F."/>
            <person name="Richmond T.A."/>
            <person name="Duda T.F. Jr."/>
            <person name="Elliger C."/>
            <person name="Lebaric Z."/>
            <person name="Schulz J."/>
            <person name="Bingham J.P."/>
            <person name="Sweedler J.V."/>
        </authorList>
    </citation>
    <scope>NUCLEOTIDE SEQUENCE [MRNA]</scope>
    <source>
        <tissue>Venom duct</tissue>
    </source>
</reference>
<accession>A6YR31</accession>
<keyword id="KW-0102">Bromination</keyword>
<keyword id="KW-1015">Disulfide bond</keyword>
<keyword id="KW-0379">Hydroxylation</keyword>
<keyword id="KW-0872">Ion channel impairing toxin</keyword>
<keyword id="KW-0528">Neurotoxin</keyword>
<keyword id="KW-0964">Secreted</keyword>
<keyword id="KW-0800">Toxin</keyword>
<evidence type="ECO:0000250" key="1"/>
<evidence type="ECO:0000305" key="2"/>
<dbReference type="EMBL" id="EF644185">
    <property type="protein sequence ID" value="ABR92955.1"/>
    <property type="molecule type" value="mRNA"/>
</dbReference>
<dbReference type="ConoServer" id="804">
    <property type="toxin name" value="Cal12.1.2d"/>
</dbReference>
<dbReference type="GO" id="GO:0005576">
    <property type="term" value="C:extracellular region"/>
    <property type="evidence" value="ECO:0007669"/>
    <property type="project" value="UniProtKB-SubCell"/>
</dbReference>
<dbReference type="GO" id="GO:0099106">
    <property type="term" value="F:ion channel regulator activity"/>
    <property type="evidence" value="ECO:0007669"/>
    <property type="project" value="UniProtKB-KW"/>
</dbReference>
<dbReference type="GO" id="GO:0090729">
    <property type="term" value="F:toxin activity"/>
    <property type="evidence" value="ECO:0007669"/>
    <property type="project" value="UniProtKB-KW"/>
</dbReference>
<comment type="function">
    <text evidence="1">Mu-conotoxins block voltage-gated sodium channels. This toxin reversibly blocks voltage-gated sodium channel in cephalopods, with no alteration in the voltage dependence of sodium conductance or on the kinetics of inactivation (By similarity).</text>
</comment>
<comment type="subcellular location">
    <subcellularLocation>
        <location evidence="1">Secreted</location>
    </subcellularLocation>
</comment>
<comment type="tissue specificity">
    <text>Expressed by the venom duct.</text>
</comment>
<comment type="domain">
    <text>The cysteine framework is XII (C-C-C-C-CC-C-C).</text>
</comment>
<name>COC2D_CONCL</name>
<sequence>DVCDSLVGGRCIHNGCWCERSAPHGNCCNTSGCTARWWCPGTKFD</sequence>
<organism>
    <name type="scientific">Californiconus californicus</name>
    <name type="common">California cone</name>
    <name type="synonym">Conus californicus</name>
    <dbReference type="NCBI Taxonomy" id="1736779"/>
    <lineage>
        <taxon>Eukaryota</taxon>
        <taxon>Metazoa</taxon>
        <taxon>Spiralia</taxon>
        <taxon>Lophotrochozoa</taxon>
        <taxon>Mollusca</taxon>
        <taxon>Gastropoda</taxon>
        <taxon>Caenogastropoda</taxon>
        <taxon>Neogastropoda</taxon>
        <taxon>Conoidea</taxon>
        <taxon>Conidae</taxon>
        <taxon>Californiconus</taxon>
    </lineage>
</organism>
<proteinExistence type="evidence at transcript level"/>
<feature type="peptide" id="PRO_0000392272" description="Mu-conotoxin-like Cal 12.1.2d">
    <location>
        <begin position="1"/>
        <end position="45"/>
    </location>
</feature>
<feature type="modified residue" description="6'-bromotryptophan" evidence="1">
    <location>
        <position position="17"/>
    </location>
</feature>
<feature type="modified residue" description="4-hydroxyproline" evidence="1">
    <location>
        <position position="23"/>
    </location>
</feature>
<feature type="modified residue" description="6'-bromotryptophan" evidence="1">
    <location>
        <position position="37"/>
    </location>
</feature>
<feature type="modified residue" description="6'-bromotryptophan" evidence="1">
    <location>
        <position position="38"/>
    </location>
</feature>
<feature type="modified residue" description="4-hydroxyproline" evidence="1">
    <location>
        <position position="40"/>
    </location>
</feature>
<feature type="disulfide bond" evidence="2">
    <location>
        <begin position="3"/>
        <end position="16"/>
    </location>
</feature>
<feature type="disulfide bond" evidence="1">
    <location>
        <begin position="11"/>
        <end position="28"/>
    </location>
</feature>
<feature type="disulfide bond" evidence="1">
    <location>
        <begin position="18"/>
        <end position="33"/>
    </location>
</feature>
<feature type="disulfide bond" evidence="1">
    <location>
        <begin position="27"/>
        <end position="39"/>
    </location>
</feature>